<name>YEGS_XANAC</name>
<sequence>MAPSHWRLILNGKSTDNLDLREAVGTLRKRGIQLDVRVTWEDGDAERYVGEAVADGVHTVVAAGGDGTLSEVAAALAHHEGDAATLPSLGLVPLGTANDFATAATLPIAPLEALTLIAERVAQPVDLLRIDADHGPHWCANVASGGFGTQVTVETDEGLKKMLGGLAYLITGMSRLGRIDPISARFSGPEFSWEGEFIALGLGNGRQAGGGQALCPEALIDDGLLDVTIVPDLDGEVAATLGTLVTGGKQAALERVAVRARVPWLDIVSQQPLTLNLDGEPETSRHFRIECVPARLRMHLPGECPLLGG</sequence>
<reference key="1">
    <citation type="journal article" date="2002" name="Nature">
        <title>Comparison of the genomes of two Xanthomonas pathogens with differing host specificities.</title>
        <authorList>
            <person name="da Silva A.C.R."/>
            <person name="Ferro J.A."/>
            <person name="Reinach F.C."/>
            <person name="Farah C.S."/>
            <person name="Furlan L.R."/>
            <person name="Quaggio R.B."/>
            <person name="Monteiro-Vitorello C.B."/>
            <person name="Van Sluys M.A."/>
            <person name="Almeida N.F. Jr."/>
            <person name="Alves L.M.C."/>
            <person name="do Amaral A.M."/>
            <person name="Bertolini M.C."/>
            <person name="Camargo L.E.A."/>
            <person name="Camarotte G."/>
            <person name="Cannavan F."/>
            <person name="Cardozo J."/>
            <person name="Chambergo F."/>
            <person name="Ciapina L.P."/>
            <person name="Cicarelli R.M.B."/>
            <person name="Coutinho L.L."/>
            <person name="Cursino-Santos J.R."/>
            <person name="El-Dorry H."/>
            <person name="Faria J.B."/>
            <person name="Ferreira A.J.S."/>
            <person name="Ferreira R.C.C."/>
            <person name="Ferro M.I.T."/>
            <person name="Formighieri E.F."/>
            <person name="Franco M.C."/>
            <person name="Greggio C.C."/>
            <person name="Gruber A."/>
            <person name="Katsuyama A.M."/>
            <person name="Kishi L.T."/>
            <person name="Leite R.P."/>
            <person name="Lemos E.G.M."/>
            <person name="Lemos M.V.F."/>
            <person name="Locali E.C."/>
            <person name="Machado M.A."/>
            <person name="Madeira A.M.B.N."/>
            <person name="Martinez-Rossi N.M."/>
            <person name="Martins E.C."/>
            <person name="Meidanis J."/>
            <person name="Menck C.F.M."/>
            <person name="Miyaki C.Y."/>
            <person name="Moon D.H."/>
            <person name="Moreira L.M."/>
            <person name="Novo M.T.M."/>
            <person name="Okura V.K."/>
            <person name="Oliveira M.C."/>
            <person name="Oliveira V.R."/>
            <person name="Pereira H.A."/>
            <person name="Rossi A."/>
            <person name="Sena J.A.D."/>
            <person name="Silva C."/>
            <person name="de Souza R.F."/>
            <person name="Spinola L.A.F."/>
            <person name="Takita M.A."/>
            <person name="Tamura R.E."/>
            <person name="Teixeira E.C."/>
            <person name="Tezza R.I.D."/>
            <person name="Trindade dos Santos M."/>
            <person name="Truffi D."/>
            <person name="Tsai S.M."/>
            <person name="White F.F."/>
            <person name="Setubal J.C."/>
            <person name="Kitajima J.P."/>
        </authorList>
    </citation>
    <scope>NUCLEOTIDE SEQUENCE [LARGE SCALE GENOMIC DNA]</scope>
    <source>
        <strain>306</strain>
    </source>
</reference>
<organism>
    <name type="scientific">Xanthomonas axonopodis pv. citri (strain 306)</name>
    <dbReference type="NCBI Taxonomy" id="190486"/>
    <lineage>
        <taxon>Bacteria</taxon>
        <taxon>Pseudomonadati</taxon>
        <taxon>Pseudomonadota</taxon>
        <taxon>Gammaproteobacteria</taxon>
        <taxon>Lysobacterales</taxon>
        <taxon>Lysobacteraceae</taxon>
        <taxon>Xanthomonas</taxon>
    </lineage>
</organism>
<feature type="chain" id="PRO_0000292164" description="Probable lipid kinase YegS-like">
    <location>
        <begin position="1"/>
        <end position="309"/>
    </location>
</feature>
<feature type="domain" description="DAGKc" evidence="1">
    <location>
        <begin position="1"/>
        <end position="134"/>
    </location>
</feature>
<feature type="active site" description="Proton acceptor" evidence="1">
    <location>
        <position position="280"/>
    </location>
</feature>
<feature type="binding site" evidence="1">
    <location>
        <position position="39"/>
    </location>
    <ligand>
        <name>ATP</name>
        <dbReference type="ChEBI" id="CHEBI:30616"/>
    </ligand>
</feature>
<feature type="binding site" evidence="1">
    <location>
        <begin position="65"/>
        <end position="71"/>
    </location>
    <ligand>
        <name>ATP</name>
        <dbReference type="ChEBI" id="CHEBI:30616"/>
    </ligand>
</feature>
<feature type="binding site" evidence="1">
    <location>
        <position position="96"/>
    </location>
    <ligand>
        <name>ATP</name>
        <dbReference type="ChEBI" id="CHEBI:30616"/>
    </ligand>
</feature>
<feature type="binding site" evidence="1">
    <location>
        <position position="219"/>
    </location>
    <ligand>
        <name>Mg(2+)</name>
        <dbReference type="ChEBI" id="CHEBI:18420"/>
    </ligand>
</feature>
<feature type="binding site" evidence="1">
    <location>
        <position position="222"/>
    </location>
    <ligand>
        <name>Mg(2+)</name>
        <dbReference type="ChEBI" id="CHEBI:18420"/>
    </ligand>
</feature>
<feature type="binding site" evidence="1">
    <location>
        <position position="224"/>
    </location>
    <ligand>
        <name>Mg(2+)</name>
        <dbReference type="ChEBI" id="CHEBI:18420"/>
    </ligand>
</feature>
<proteinExistence type="inferred from homology"/>
<dbReference type="EC" id="2.7.1.-" evidence="1"/>
<dbReference type="EMBL" id="AE008923">
    <property type="protein sequence ID" value="AAM35366.1"/>
    <property type="molecule type" value="Genomic_DNA"/>
</dbReference>
<dbReference type="SMR" id="Q8PQ53"/>
<dbReference type="KEGG" id="xac:XAC0475"/>
<dbReference type="eggNOG" id="COG1597">
    <property type="taxonomic scope" value="Bacteria"/>
</dbReference>
<dbReference type="HOGENOM" id="CLU_045532_1_1_6"/>
<dbReference type="Proteomes" id="UP000000576">
    <property type="component" value="Chromosome"/>
</dbReference>
<dbReference type="GO" id="GO:0005737">
    <property type="term" value="C:cytoplasm"/>
    <property type="evidence" value="ECO:0007669"/>
    <property type="project" value="UniProtKB-SubCell"/>
</dbReference>
<dbReference type="GO" id="GO:0005886">
    <property type="term" value="C:plasma membrane"/>
    <property type="evidence" value="ECO:0007669"/>
    <property type="project" value="TreeGrafter"/>
</dbReference>
<dbReference type="GO" id="GO:0005524">
    <property type="term" value="F:ATP binding"/>
    <property type="evidence" value="ECO:0007669"/>
    <property type="project" value="UniProtKB-UniRule"/>
</dbReference>
<dbReference type="GO" id="GO:0001727">
    <property type="term" value="F:lipid kinase activity"/>
    <property type="evidence" value="ECO:0007669"/>
    <property type="project" value="UniProtKB-UniRule"/>
</dbReference>
<dbReference type="GO" id="GO:0000287">
    <property type="term" value="F:magnesium ion binding"/>
    <property type="evidence" value="ECO:0007669"/>
    <property type="project" value="UniProtKB-UniRule"/>
</dbReference>
<dbReference type="GO" id="GO:0008654">
    <property type="term" value="P:phospholipid biosynthetic process"/>
    <property type="evidence" value="ECO:0007669"/>
    <property type="project" value="UniProtKB-UniRule"/>
</dbReference>
<dbReference type="Gene3D" id="2.60.200.40">
    <property type="match status" value="1"/>
</dbReference>
<dbReference type="Gene3D" id="3.40.50.10330">
    <property type="entry name" value="Probable inorganic polyphosphate/atp-NAD kinase, domain 1"/>
    <property type="match status" value="1"/>
</dbReference>
<dbReference type="HAMAP" id="MF_01377">
    <property type="entry name" value="YegS"/>
    <property type="match status" value="1"/>
</dbReference>
<dbReference type="InterPro" id="IPR017438">
    <property type="entry name" value="ATP-NAD_kinase_N"/>
</dbReference>
<dbReference type="InterPro" id="IPR005218">
    <property type="entry name" value="Diacylglycerol/lipid_kinase"/>
</dbReference>
<dbReference type="InterPro" id="IPR001206">
    <property type="entry name" value="Diacylglycerol_kinase_cat_dom"/>
</dbReference>
<dbReference type="InterPro" id="IPR022433">
    <property type="entry name" value="Lip_kinase_YegS"/>
</dbReference>
<dbReference type="InterPro" id="IPR050187">
    <property type="entry name" value="Lipid_Phosphate_FormReg"/>
</dbReference>
<dbReference type="InterPro" id="IPR016064">
    <property type="entry name" value="NAD/diacylglycerol_kinase_sf"/>
</dbReference>
<dbReference type="InterPro" id="IPR045540">
    <property type="entry name" value="YegS/DAGK_C"/>
</dbReference>
<dbReference type="NCBIfam" id="TIGR03702">
    <property type="entry name" value="lip_kinase_YegS"/>
    <property type="match status" value="1"/>
</dbReference>
<dbReference type="NCBIfam" id="NF009602">
    <property type="entry name" value="PRK13054.1"/>
    <property type="match status" value="1"/>
</dbReference>
<dbReference type="NCBIfam" id="TIGR00147">
    <property type="entry name" value="YegS/Rv2252/BmrU family lipid kinase"/>
    <property type="match status" value="1"/>
</dbReference>
<dbReference type="PANTHER" id="PTHR12358:SF106">
    <property type="entry name" value="LIPID KINASE YEGS"/>
    <property type="match status" value="1"/>
</dbReference>
<dbReference type="PANTHER" id="PTHR12358">
    <property type="entry name" value="SPHINGOSINE KINASE"/>
    <property type="match status" value="1"/>
</dbReference>
<dbReference type="Pfam" id="PF00781">
    <property type="entry name" value="DAGK_cat"/>
    <property type="match status" value="1"/>
</dbReference>
<dbReference type="Pfam" id="PF19279">
    <property type="entry name" value="YegS_C"/>
    <property type="match status" value="1"/>
</dbReference>
<dbReference type="SMART" id="SM00046">
    <property type="entry name" value="DAGKc"/>
    <property type="match status" value="1"/>
</dbReference>
<dbReference type="SUPFAM" id="SSF111331">
    <property type="entry name" value="NAD kinase/diacylglycerol kinase-like"/>
    <property type="match status" value="1"/>
</dbReference>
<dbReference type="PROSITE" id="PS50146">
    <property type="entry name" value="DAGK"/>
    <property type="match status" value="1"/>
</dbReference>
<keyword id="KW-0067">ATP-binding</keyword>
<keyword id="KW-0963">Cytoplasm</keyword>
<keyword id="KW-0418">Kinase</keyword>
<keyword id="KW-0444">Lipid biosynthesis</keyword>
<keyword id="KW-0443">Lipid metabolism</keyword>
<keyword id="KW-0460">Magnesium</keyword>
<keyword id="KW-0479">Metal-binding</keyword>
<keyword id="KW-0547">Nucleotide-binding</keyword>
<keyword id="KW-0594">Phospholipid biosynthesis</keyword>
<keyword id="KW-1208">Phospholipid metabolism</keyword>
<keyword id="KW-0808">Transferase</keyword>
<protein>
    <recommendedName>
        <fullName evidence="1">Probable lipid kinase YegS-like</fullName>
        <ecNumber evidence="1">2.7.1.-</ecNumber>
    </recommendedName>
</protein>
<gene>
    <name type="ordered locus">XAC0475</name>
</gene>
<accession>Q8PQ53</accession>
<comment type="function">
    <text evidence="1">Probably phosphorylates lipids; the in vivo substrate is unknown.</text>
</comment>
<comment type="cofactor">
    <cofactor evidence="1">
        <name>Mg(2+)</name>
        <dbReference type="ChEBI" id="CHEBI:18420"/>
    </cofactor>
    <cofactor evidence="1">
        <name>Ca(2+)</name>
        <dbReference type="ChEBI" id="CHEBI:29108"/>
    </cofactor>
    <text evidence="1">Binds 1 Mg(2+) ion per subunit. Ca(2+) may be able to substitute.</text>
</comment>
<comment type="subcellular location">
    <subcellularLocation>
        <location evidence="1">Cytoplasm</location>
    </subcellularLocation>
</comment>
<comment type="similarity">
    <text evidence="1">Belongs to the diacylglycerol/lipid kinase family. YegS lipid kinase subfamily.</text>
</comment>
<evidence type="ECO:0000255" key="1">
    <source>
        <dbReference type="HAMAP-Rule" id="MF_01377"/>
    </source>
</evidence>